<accession>A4KA45</accession>
<proteinExistence type="evidence at protein level"/>
<protein>
    <recommendedName>
        <fullName>Profilin-4</fullName>
    </recommendedName>
    <alternativeName>
        <fullName>Allergen Cor a 2</fullName>
    </alternativeName>
    <alternativeName>
        <fullName>Pollen allergen Cor a 2</fullName>
    </alternativeName>
    <allergenName>Cor a 2</allergenName>
</protein>
<sequence>MSWQTYVDEHLMCDIDGQGQQLAASAIVGHDGSVWAQSSSFPQLKPEEITGIMKDFDEPGHLAPTGLHLGGTKYMVIQGEAGAVIRGKKGSGGITIKKTGQALVFGIYEEPVTPGQCNMVVERLGDYLIDQGL</sequence>
<dbReference type="EMBL" id="DQ663549">
    <property type="protein sequence ID" value="ABG81302.1"/>
    <property type="molecule type" value="mRNA"/>
</dbReference>
<dbReference type="EMBL" id="DQ663550">
    <property type="protein sequence ID" value="ABG81303.1"/>
    <property type="molecule type" value="mRNA"/>
</dbReference>
<dbReference type="EMBL" id="DQ663551">
    <property type="protein sequence ID" value="ABG81304.1"/>
    <property type="molecule type" value="mRNA"/>
</dbReference>
<dbReference type="EMBL" id="DQ663552">
    <property type="protein sequence ID" value="ABG81305.1"/>
    <property type="molecule type" value="mRNA"/>
</dbReference>
<dbReference type="RefSeq" id="NP_001414806.1">
    <property type="nucleotide sequence ID" value="NM_001427877.1"/>
</dbReference>
<dbReference type="SMR" id="A4KA45"/>
<dbReference type="Allergome" id="244">
    <property type="allergen name" value="Cor a 2"/>
</dbReference>
<dbReference type="EnsemblPlants" id="Cav11g13750.t1">
    <property type="protein sequence ID" value="Cav11g13750.t1"/>
    <property type="gene ID" value="Cav11g13750"/>
</dbReference>
<dbReference type="GeneID" id="132165476"/>
<dbReference type="Gramene" id="Cav11g13750.t1">
    <property type="protein sequence ID" value="Cav11g13750.t1"/>
    <property type="gene ID" value="Cav11g13750"/>
</dbReference>
<dbReference type="OrthoDB" id="421374at2759"/>
<dbReference type="GO" id="GO:0005938">
    <property type="term" value="C:cell cortex"/>
    <property type="evidence" value="ECO:0007669"/>
    <property type="project" value="TreeGrafter"/>
</dbReference>
<dbReference type="GO" id="GO:0005856">
    <property type="term" value="C:cytoskeleton"/>
    <property type="evidence" value="ECO:0007669"/>
    <property type="project" value="UniProtKB-SubCell"/>
</dbReference>
<dbReference type="GO" id="GO:0003785">
    <property type="term" value="F:actin monomer binding"/>
    <property type="evidence" value="ECO:0007669"/>
    <property type="project" value="TreeGrafter"/>
</dbReference>
<dbReference type="CDD" id="cd00148">
    <property type="entry name" value="PROF"/>
    <property type="match status" value="1"/>
</dbReference>
<dbReference type="FunFam" id="3.30.450.30:FF:000001">
    <property type="entry name" value="Profilin"/>
    <property type="match status" value="1"/>
</dbReference>
<dbReference type="Gene3D" id="3.30.450.30">
    <property type="entry name" value="Dynein light chain 2a, cytoplasmic"/>
    <property type="match status" value="1"/>
</dbReference>
<dbReference type="InterPro" id="IPR048278">
    <property type="entry name" value="PFN"/>
</dbReference>
<dbReference type="InterPro" id="IPR005455">
    <property type="entry name" value="PFN_euk"/>
</dbReference>
<dbReference type="InterPro" id="IPR036140">
    <property type="entry name" value="PFN_sf"/>
</dbReference>
<dbReference type="InterPro" id="IPR027310">
    <property type="entry name" value="Profilin_CS"/>
</dbReference>
<dbReference type="PANTHER" id="PTHR11604">
    <property type="entry name" value="PROFILIN"/>
    <property type="match status" value="1"/>
</dbReference>
<dbReference type="PANTHER" id="PTHR11604:SF25">
    <property type="entry name" value="PROFILIN-5"/>
    <property type="match status" value="1"/>
</dbReference>
<dbReference type="Pfam" id="PF00235">
    <property type="entry name" value="Profilin"/>
    <property type="match status" value="1"/>
</dbReference>
<dbReference type="PRINTS" id="PR00392">
    <property type="entry name" value="PROFILIN"/>
</dbReference>
<dbReference type="PRINTS" id="PR01640">
    <property type="entry name" value="PROFILINPLNT"/>
</dbReference>
<dbReference type="SMART" id="SM00392">
    <property type="entry name" value="PROF"/>
    <property type="match status" value="1"/>
</dbReference>
<dbReference type="SUPFAM" id="SSF55770">
    <property type="entry name" value="Profilin (actin-binding protein)"/>
    <property type="match status" value="1"/>
</dbReference>
<dbReference type="PROSITE" id="PS00414">
    <property type="entry name" value="PROFILIN"/>
    <property type="match status" value="1"/>
</dbReference>
<reference key="1">
    <citation type="journal article" date="2012" name="PLoS ONE">
        <title>Characterization of profilin polymorphism in pollen with a focus on multifunctionality.</title>
        <authorList>
            <person name="Jimenez-Lopez J.C."/>
            <person name="Morales S."/>
            <person name="Castro A.J."/>
            <person name="Volkmann D."/>
            <person name="Rodriguez-Garcia M.I."/>
            <person name="Alche Jde D."/>
        </authorList>
    </citation>
    <scope>NUCLEOTIDE SEQUENCE [MRNA]</scope>
    <scope>POLYMORPHISM</scope>
    <source>
        <strain>cv. Avellana</strain>
    </source>
</reference>
<reference key="2">
    <citation type="journal article" date="2013" name="PLoS ONE">
        <title>Analysis of the effects of polymorphism on pollen profilin structural functionality and the generation of conformational, T- and B-cell epitopes.</title>
        <authorList>
            <person name="Jimenez-Lopez J.C."/>
            <person name="Rodriguez-Garcia M.I."/>
            <person name="Alche J.D."/>
        </authorList>
    </citation>
    <scope>3D-STRUCTURE MODELING</scope>
    <scope>DISULFIDE BOND</scope>
</reference>
<evidence type="ECO:0000250" key="1"/>
<evidence type="ECO:0000305" key="2"/>
<evidence type="ECO:0000305" key="3">
    <source>
    </source>
</evidence>
<feature type="initiator methionine" description="Removed" evidence="1">
    <location>
        <position position="1"/>
    </location>
</feature>
<feature type="chain" id="PRO_0000424966" description="Profilin-4">
    <location>
        <begin position="2"/>
        <end position="133"/>
    </location>
</feature>
<feature type="short sequence motif" description="Involved in PIP2 interaction">
    <location>
        <begin position="83"/>
        <end position="99"/>
    </location>
</feature>
<feature type="modified residue" description="Phosphothreonine" evidence="1">
    <location>
        <position position="113"/>
    </location>
</feature>
<feature type="disulfide bond" evidence="3">
    <location>
        <begin position="13"/>
        <end position="117"/>
    </location>
</feature>
<keyword id="KW-0009">Actin-binding</keyword>
<keyword id="KW-0020">Allergen</keyword>
<keyword id="KW-0963">Cytoplasm</keyword>
<keyword id="KW-0206">Cytoskeleton</keyword>
<keyword id="KW-1015">Disulfide bond</keyword>
<keyword id="KW-0597">Phosphoprotein</keyword>
<comment type="function">
    <text evidence="1">Binds to actin and affects the structure of the cytoskeleton. At high concentrations, profilin prevents the polymerization of actin, whereas it enhances it at low concentrations (By similarity).</text>
</comment>
<comment type="subunit">
    <text evidence="1">Occurs in many kinds of cells as a complex with monomeric actin in a 1:1 ratio.</text>
</comment>
<comment type="subcellular location">
    <subcellularLocation>
        <location evidence="1">Cytoplasm</location>
        <location evidence="1">Cytoskeleton</location>
    </subcellularLocation>
</comment>
<comment type="PTM">
    <text evidence="1">Phosphorylated by MAP kinases.</text>
</comment>
<comment type="polymorphism">
    <text>Several isoforms of the allergen exist due to polymorphism.</text>
</comment>
<comment type="allergen">
    <text>Causes an allergic reaction in human.</text>
</comment>
<comment type="miscellaneous">
    <text evidence="3">The variability of the residues taking part of IgE-binding epitopes might be responsible of the difference in cross-reactivity among olive pollen cultivars, and between distantly related pollen species, leading to a variable range of allergy reactions among atopic patients.</text>
</comment>
<comment type="similarity">
    <text evidence="2">Belongs to the profilin family.</text>
</comment>
<name>PROF4_CORAV</name>
<organism>
    <name type="scientific">Corylus avellana</name>
    <name type="common">European hazel</name>
    <name type="synonym">Corylus maxima</name>
    <dbReference type="NCBI Taxonomy" id="13451"/>
    <lineage>
        <taxon>Eukaryota</taxon>
        <taxon>Viridiplantae</taxon>
        <taxon>Streptophyta</taxon>
        <taxon>Embryophyta</taxon>
        <taxon>Tracheophyta</taxon>
        <taxon>Spermatophyta</taxon>
        <taxon>Magnoliopsida</taxon>
        <taxon>eudicotyledons</taxon>
        <taxon>Gunneridae</taxon>
        <taxon>Pentapetalae</taxon>
        <taxon>rosids</taxon>
        <taxon>fabids</taxon>
        <taxon>Fagales</taxon>
        <taxon>Betulaceae</taxon>
        <taxon>Corylus</taxon>
    </lineage>
</organism>